<dbReference type="EMBL" id="FO081044">
    <property type="protein sequence ID" value="CCD68758.1"/>
    <property type="molecule type" value="Genomic_DNA"/>
</dbReference>
<dbReference type="PIR" id="T16002">
    <property type="entry name" value="T16002"/>
</dbReference>
<dbReference type="RefSeq" id="NP_495006.2">
    <property type="nucleotide sequence ID" value="NM_062605.7"/>
</dbReference>
<dbReference type="SMR" id="Q19262"/>
<dbReference type="BioGRID" id="39255">
    <property type="interactions" value="13"/>
</dbReference>
<dbReference type="ComplexPortal" id="CPX-712">
    <property type="entry name" value="Exocyst"/>
</dbReference>
<dbReference type="FunCoup" id="Q19262">
    <property type="interactions" value="2723"/>
</dbReference>
<dbReference type="STRING" id="6239.F09E5.5.1"/>
<dbReference type="PaxDb" id="6239-F09E5.5.2"/>
<dbReference type="PeptideAtlas" id="Q19262"/>
<dbReference type="EnsemblMetazoa" id="F09E5.5.1">
    <property type="protein sequence ID" value="F09E5.5.1"/>
    <property type="gene ID" value="WBGene00017284"/>
</dbReference>
<dbReference type="EnsemblMetazoa" id="F09E5.5.2">
    <property type="protein sequence ID" value="F09E5.5.2"/>
    <property type="gene ID" value="WBGene00017284"/>
</dbReference>
<dbReference type="GeneID" id="173910"/>
<dbReference type="KEGG" id="cel:CELE_F09E5.5"/>
<dbReference type="UCSC" id="F09E5.5.2">
    <property type="organism name" value="c. elegans"/>
</dbReference>
<dbReference type="AGR" id="WB:WBGene00017284"/>
<dbReference type="CTD" id="173910"/>
<dbReference type="WormBase" id="F09E5.5">
    <property type="protein sequence ID" value="CE29752"/>
    <property type="gene ID" value="WBGene00017284"/>
    <property type="gene designation" value="sec-6"/>
</dbReference>
<dbReference type="eggNOG" id="KOG2286">
    <property type="taxonomic scope" value="Eukaryota"/>
</dbReference>
<dbReference type="GeneTree" id="ENSGT01030000234613"/>
<dbReference type="HOGENOM" id="CLU_016260_1_0_1"/>
<dbReference type="InParanoid" id="Q19262"/>
<dbReference type="OMA" id="MNIGPKT"/>
<dbReference type="OrthoDB" id="10047020at2759"/>
<dbReference type="PhylomeDB" id="Q19262"/>
<dbReference type="Reactome" id="R-CEL-264876">
    <property type="pathway name" value="Insulin processing"/>
</dbReference>
<dbReference type="Reactome" id="R-CEL-5620916">
    <property type="pathway name" value="VxPx cargo-targeting to cilium"/>
</dbReference>
<dbReference type="PRO" id="PR:Q19262"/>
<dbReference type="Proteomes" id="UP000001940">
    <property type="component" value="Chromosome II"/>
</dbReference>
<dbReference type="Bgee" id="WBGene00017284">
    <property type="expression patterns" value="Expressed in pharyngeal muscle cell (C elegans) and 4 other cell types or tissues"/>
</dbReference>
<dbReference type="GO" id="GO:0000145">
    <property type="term" value="C:exocyst"/>
    <property type="evidence" value="ECO:0000250"/>
    <property type="project" value="WormBase"/>
</dbReference>
<dbReference type="GO" id="GO:0000149">
    <property type="term" value="F:SNARE binding"/>
    <property type="evidence" value="ECO:0000318"/>
    <property type="project" value="GO_Central"/>
</dbReference>
<dbReference type="GO" id="GO:0051601">
    <property type="term" value="P:exocyst localization"/>
    <property type="evidence" value="ECO:0000318"/>
    <property type="project" value="GO_Central"/>
</dbReference>
<dbReference type="GO" id="GO:0006887">
    <property type="term" value="P:exocytosis"/>
    <property type="evidence" value="ECO:0000318"/>
    <property type="project" value="GO_Central"/>
</dbReference>
<dbReference type="GO" id="GO:0015031">
    <property type="term" value="P:protein transport"/>
    <property type="evidence" value="ECO:0007669"/>
    <property type="project" value="UniProtKB-KW"/>
</dbReference>
<dbReference type="GO" id="GO:0090522">
    <property type="term" value="P:vesicle tethering involved in exocytosis"/>
    <property type="evidence" value="ECO:0000315"/>
    <property type="project" value="ComplexPortal"/>
</dbReference>
<dbReference type="Gene3D" id="1.10.357.50">
    <property type="match status" value="1"/>
</dbReference>
<dbReference type="Gene3D" id="1.10.357.70">
    <property type="entry name" value="Exocyst complex component Sec6, C-terminal domain"/>
    <property type="match status" value="1"/>
</dbReference>
<dbReference type="InterPro" id="IPR010326">
    <property type="entry name" value="EXOC3/Sec6"/>
</dbReference>
<dbReference type="InterPro" id="IPR042532">
    <property type="entry name" value="EXOC3/Sec6_C"/>
</dbReference>
<dbReference type="PANTHER" id="PTHR21292:SF1">
    <property type="entry name" value="EXOCYST COMPLEX COMPONENT 3"/>
    <property type="match status" value="1"/>
</dbReference>
<dbReference type="PANTHER" id="PTHR21292">
    <property type="entry name" value="EXOCYST COMPLEX COMPONENT SEC6-RELATED"/>
    <property type="match status" value="1"/>
</dbReference>
<dbReference type="Pfam" id="PF06046">
    <property type="entry name" value="Sec6"/>
    <property type="match status" value="1"/>
</dbReference>
<feature type="chain" id="PRO_0000118928" description="Exocyst complex component 3">
    <location>
        <begin position="1"/>
        <end position="796"/>
    </location>
</feature>
<feature type="coiled-coil region" evidence="2">
    <location>
        <begin position="87"/>
        <end position="174"/>
    </location>
</feature>
<gene>
    <name type="primary">sec-6</name>
    <name type="ORF">F09E5.5</name>
</gene>
<protein>
    <recommendedName>
        <fullName>Exocyst complex component 3</fullName>
    </recommendedName>
    <alternativeName>
        <fullName>Exocyst complex component Sec6</fullName>
    </alternativeName>
</protein>
<reference key="1">
    <citation type="journal article" date="1998" name="Science">
        <title>Genome sequence of the nematode C. elegans: a platform for investigating biology.</title>
        <authorList>
            <consortium name="The C. elegans sequencing consortium"/>
        </authorList>
    </citation>
    <scope>NUCLEOTIDE SEQUENCE [LARGE SCALE GENOMIC DNA]</scope>
    <source>
        <strain>Bristol N2</strain>
    </source>
</reference>
<name>EXOC3_CAEEL</name>
<comment type="function">
    <text evidence="1">Component of the exocyst complex involved in the docking of exocytic vesicles with fusion sites on the plasma membrane.</text>
</comment>
<comment type="subunit">
    <text evidence="1">The exocyst complex is composed of sec-3/exoc1, sec-5/exoc2, sec-6/exoc3, sec-8/exoc4, sec-10/exoc5, sec-15/exoc6, exo-70/exoc7 and exo-84/exoc8.</text>
</comment>
<comment type="similarity">
    <text evidence="3">Belongs to the SEC6 family.</text>
</comment>
<evidence type="ECO:0000250" key="1"/>
<evidence type="ECO:0000255" key="2"/>
<evidence type="ECO:0000305" key="3"/>
<keyword id="KW-0175">Coiled coil</keyword>
<keyword id="KW-0268">Exocytosis</keyword>
<keyword id="KW-0653">Protein transport</keyword>
<keyword id="KW-1185">Reference proteome</keyword>
<keyword id="KW-0813">Transport</keyword>
<proteinExistence type="inferred from homology"/>
<organism>
    <name type="scientific">Caenorhabditis elegans</name>
    <dbReference type="NCBI Taxonomy" id="6239"/>
    <lineage>
        <taxon>Eukaryota</taxon>
        <taxon>Metazoa</taxon>
        <taxon>Ecdysozoa</taxon>
        <taxon>Nematoda</taxon>
        <taxon>Chromadorea</taxon>
        <taxon>Rhabditida</taxon>
        <taxon>Rhabditina</taxon>
        <taxon>Rhabditomorpha</taxon>
        <taxon>Rhabditoidea</taxon>
        <taxon>Rhabditidae</taxon>
        <taxon>Peloderinae</taxon>
        <taxon>Caenorhabditis</taxon>
    </lineage>
</organism>
<sequence>MDVDVEEAALEQVAALLQRPDQLEKLPELKKRADRKKLAVEAMLRTGVQGQLEGIRTAIAHLQTASDDITAISQGVHDIRERLGPFPQLKEKLRELRDANARHGQYAAAMENLKHIFNLQTTLQEIRDALDDEKSGGNLLLAHKHIMDLERARDELLAEVHKMSGTNTEKEQMLLVNFFKGVDSVVAELSKNMWFILGRTLEMVKGNEQGGGPQQVVTCLRIVEREERIDKFYMEARSKNSSAFVPPGRPRNWKEKALRSLEKTVSNRVDGNQLEDRSLNKAWLARYLEVCKNVIMDDLQLAKVAIPCFPPDWQIYDRYVHMYHTSVCRRLREVASEHLEKSELVQLMSWIKFYASEDMLGHPKLRINAQAILQDSPVLSRSTLNQLCDQFVEMSRDDLKLWLKNTVSHETHDWYKNLRPSEDNHGYFYTDLPNTVFGMLKDTVTLAKEVSVEVIPSIINLTIQEFNELAGKYRDAFTAYKTDYFAERSKYQEFTSNIIAIANNLHTCIESTEKYKQQIRLSMEGEQNAAAAMTTPLASGRRTAVRQQQLIENMDALNTKWSNAASVAVNYLREEVITDIAPSLVEIFSKKWLTGSAALETVCMTISDYYHDHKHLRPVTRSTLLMDLQFRIVSEYLKAIETKRVSLNSYEERALAGKRMKADVVRLDNLYAEFATSSDMADQLPLLTSIVAAAGDVISLKDKSLLSLEATSFARKFPNCPAELLSAVIATRDDISGSEARSLASEVLQHVQFHPKDQIFDQLFALRQQENSERLPNLGMANMFKADFMSMLKRDA</sequence>
<accession>Q19262</accession>